<proteinExistence type="inferred from homology"/>
<dbReference type="EMBL" id="AF454951">
    <property type="protein sequence ID" value="AAL59345.1"/>
    <property type="molecule type" value="Genomic_DNA"/>
</dbReference>
<dbReference type="EMBL" id="AE017224">
    <property type="protein sequence ID" value="AAX76407.1"/>
    <property type="molecule type" value="Genomic_DNA"/>
</dbReference>
<dbReference type="RefSeq" id="WP_002968912.1">
    <property type="nucleotide sequence ID" value="NC_006933.1"/>
</dbReference>
<dbReference type="SMR" id="Q8VQK4"/>
<dbReference type="EnsemblBacteria" id="AAX76407">
    <property type="protein sequence ID" value="AAX76407"/>
    <property type="gene ID" value="BruAb2_1031"/>
</dbReference>
<dbReference type="KEGG" id="bmb:BruAb2_1031"/>
<dbReference type="HOGENOM" id="CLU_036879_0_1_5"/>
<dbReference type="PHI-base" id="PHI:8281"/>
<dbReference type="Proteomes" id="UP000000540">
    <property type="component" value="Chromosome II"/>
</dbReference>
<dbReference type="GO" id="GO:0005886">
    <property type="term" value="C:plasma membrane"/>
    <property type="evidence" value="ECO:0007669"/>
    <property type="project" value="UniProtKB-SubCell"/>
</dbReference>
<dbReference type="GO" id="GO:0071916">
    <property type="term" value="F:dipeptide transmembrane transporter activity"/>
    <property type="evidence" value="ECO:0007669"/>
    <property type="project" value="TreeGrafter"/>
</dbReference>
<dbReference type="CDD" id="cd06261">
    <property type="entry name" value="TM_PBP2"/>
    <property type="match status" value="1"/>
</dbReference>
<dbReference type="Gene3D" id="1.10.3720.10">
    <property type="entry name" value="MetI-like"/>
    <property type="match status" value="1"/>
</dbReference>
<dbReference type="InterPro" id="IPR045621">
    <property type="entry name" value="BPD_transp_1_N"/>
</dbReference>
<dbReference type="InterPro" id="IPR000515">
    <property type="entry name" value="MetI-like"/>
</dbReference>
<dbReference type="InterPro" id="IPR035906">
    <property type="entry name" value="MetI-like_sf"/>
</dbReference>
<dbReference type="PANTHER" id="PTHR43163">
    <property type="entry name" value="DIPEPTIDE TRANSPORT SYSTEM PERMEASE PROTEIN DPPB-RELATED"/>
    <property type="match status" value="1"/>
</dbReference>
<dbReference type="PANTHER" id="PTHR43163:SF6">
    <property type="entry name" value="DIPEPTIDE TRANSPORT SYSTEM PERMEASE PROTEIN DPPB-RELATED"/>
    <property type="match status" value="1"/>
</dbReference>
<dbReference type="Pfam" id="PF00528">
    <property type="entry name" value="BPD_transp_1"/>
    <property type="match status" value="1"/>
</dbReference>
<dbReference type="Pfam" id="PF19300">
    <property type="entry name" value="BPD_transp_1_N"/>
    <property type="match status" value="1"/>
</dbReference>
<dbReference type="SUPFAM" id="SSF161098">
    <property type="entry name" value="MetI-like"/>
    <property type="match status" value="1"/>
</dbReference>
<dbReference type="PROSITE" id="PS50928">
    <property type="entry name" value="ABC_TM1"/>
    <property type="match status" value="1"/>
</dbReference>
<gene>
    <name type="ordered locus">BruAb2_1031</name>
</gene>
<sequence>MTALILKRVAQAIPVMLIVAILTFLLMKLLPGDPAILIAGDGASPETVERIRVELGLDQPTVVQLGQWLWNLFHFDLGRSFLLSQPVSQAIAERLPVTISLALLAFAITIPVGIIMGVVAAYLRDSWFDTGVMSLALLGVSVPSFWLAILAVILFSVTLGWFPSAGYVPFLDSPLGWLRSLILPASILALFQIGYLARMTRSEMLEVMDQDYIRTARSKGVSEYSVLSTHAFRNALVSVLTVSGYIFSLLIGGSVVIEQIFALPGLGRLLVQAILARDLPVVQGTMLFLGFLFVAINVLVDILYTIADPRVRYD</sequence>
<organism>
    <name type="scientific">Brucella abortus biovar 1 (strain 9-941)</name>
    <dbReference type="NCBI Taxonomy" id="262698"/>
    <lineage>
        <taxon>Bacteria</taxon>
        <taxon>Pseudomonadati</taxon>
        <taxon>Pseudomonadota</taxon>
        <taxon>Alphaproteobacteria</taxon>
        <taxon>Hyphomicrobiales</taxon>
        <taxon>Brucellaceae</taxon>
        <taxon>Brucella/Ochrobactrum group</taxon>
        <taxon>Brucella</taxon>
    </lineage>
</organism>
<reference key="1">
    <citation type="submission" date="2001-12" db="EMBL/GenBank/DDBJ databases">
        <title>Tn1953, a new element from Brucella abortus.</title>
        <authorList>
            <person name="Bricker B.J."/>
        </authorList>
    </citation>
    <scope>NUCLEOTIDE SEQUENCE [GENOMIC DNA]</scope>
    <source>
        <strain>544 / Biovar 1</strain>
    </source>
</reference>
<reference key="2">
    <citation type="journal article" date="2005" name="J. Bacteriol.">
        <title>Completion of the genome sequence of Brucella abortus and comparison to the highly similar genomes of Brucella melitensis and Brucella suis.</title>
        <authorList>
            <person name="Halling S.M."/>
            <person name="Peterson-Burch B.D."/>
            <person name="Bricker B.J."/>
            <person name="Zuerner R.L."/>
            <person name="Qing Z."/>
            <person name="Li L.-L."/>
            <person name="Kapur V."/>
            <person name="Alt D.P."/>
            <person name="Olsen S.C."/>
        </authorList>
    </citation>
    <scope>NUCLEOTIDE SEQUENCE [LARGE SCALE GENOMIC DNA]</scope>
    <source>
        <strain>9-941</strain>
    </source>
</reference>
<accession>Q8VQK4</accession>
<accession>Q576M7</accession>
<protein>
    <recommendedName>
        <fullName>Putative peptide transport system permease protein BruAb2_1031</fullName>
    </recommendedName>
</protein>
<name>Y1031_BRUAB</name>
<feature type="chain" id="PRO_0000290148" description="Putative peptide transport system permease protein BruAb2_1031">
    <location>
        <begin position="1"/>
        <end position="314"/>
    </location>
</feature>
<feature type="transmembrane region" description="Helical" evidence="2">
    <location>
        <begin position="12"/>
        <end position="32"/>
    </location>
</feature>
<feature type="transmembrane region" description="Helical" evidence="2">
    <location>
        <begin position="101"/>
        <end position="121"/>
    </location>
</feature>
<feature type="transmembrane region" description="Helical" evidence="2">
    <location>
        <begin position="135"/>
        <end position="155"/>
    </location>
</feature>
<feature type="transmembrane region" description="Helical" evidence="2">
    <location>
        <begin position="177"/>
        <end position="197"/>
    </location>
</feature>
<feature type="transmembrane region" description="Helical" evidence="2">
    <location>
        <begin position="237"/>
        <end position="257"/>
    </location>
</feature>
<feature type="transmembrane region" description="Helical" evidence="2">
    <location>
        <begin position="286"/>
        <end position="306"/>
    </location>
</feature>
<feature type="domain" description="ABC transmembrane type-1" evidence="2">
    <location>
        <begin position="95"/>
        <end position="304"/>
    </location>
</feature>
<evidence type="ECO:0000250" key="1"/>
<evidence type="ECO:0000255" key="2">
    <source>
        <dbReference type="PROSITE-ProRule" id="PRU00441"/>
    </source>
</evidence>
<evidence type="ECO:0000305" key="3"/>
<keyword id="KW-0997">Cell inner membrane</keyword>
<keyword id="KW-1003">Cell membrane</keyword>
<keyword id="KW-0472">Membrane</keyword>
<keyword id="KW-0812">Transmembrane</keyword>
<keyword id="KW-1133">Transmembrane helix</keyword>
<keyword id="KW-0813">Transport</keyword>
<comment type="function">
    <text evidence="1">Probably part of an ABC transporter complex that could be involved in peptide import. Probably responsible for the translocation of the substrate across the membrane (By similarity).</text>
</comment>
<comment type="subunit">
    <text evidence="3">The complex is composed of two ATP-binding proteins (BruAb2_1033 and BruAb2_1034), two transmembrane proteins (BruAb2_1031 and BruAb2_1032) and a solute-binding protein (BruAb2_1030).</text>
</comment>
<comment type="subcellular location">
    <subcellularLocation>
        <location evidence="3">Cell inner membrane</location>
        <topology evidence="2">Multi-pass membrane protein</topology>
    </subcellularLocation>
</comment>
<comment type="similarity">
    <text evidence="3">Belongs to the binding-protein-dependent transport system permease family.</text>
</comment>